<protein>
    <recommendedName>
        <fullName evidence="1">Large ribosomal subunit protein uL14</fullName>
    </recommendedName>
    <alternativeName>
        <fullName evidence="2">50S ribosomal protein L14</fullName>
    </alternativeName>
</protein>
<accession>Q2G8X0</accession>
<reference key="1">
    <citation type="submission" date="2006-01" db="EMBL/GenBank/DDBJ databases">
        <title>Complete sequence of Novosphingobium aromaticivorans DSM 12444.</title>
        <authorList>
            <consortium name="US DOE Joint Genome Institute"/>
            <person name="Copeland A."/>
            <person name="Lucas S."/>
            <person name="Lapidus A."/>
            <person name="Barry K."/>
            <person name="Detter J.C."/>
            <person name="Glavina T."/>
            <person name="Hammon N."/>
            <person name="Israni S."/>
            <person name="Pitluck S."/>
            <person name="Chain P."/>
            <person name="Malfatti S."/>
            <person name="Shin M."/>
            <person name="Vergez L."/>
            <person name="Schmutz J."/>
            <person name="Larimer F."/>
            <person name="Land M."/>
            <person name="Kyrpides N."/>
            <person name="Ivanova N."/>
            <person name="Fredrickson J."/>
            <person name="Balkwill D."/>
            <person name="Romine M.F."/>
            <person name="Richardson P."/>
        </authorList>
    </citation>
    <scope>NUCLEOTIDE SEQUENCE [LARGE SCALE GENOMIC DNA]</scope>
    <source>
        <strain>ATCC 700278 / DSM 12444 / CCUG 56034 / CIP 105152 / NBRC 16084 / F199</strain>
    </source>
</reference>
<comment type="function">
    <text evidence="1">Binds to 23S rRNA. Forms part of two intersubunit bridges in the 70S ribosome.</text>
</comment>
<comment type="subunit">
    <text evidence="1">Part of the 50S ribosomal subunit. Forms a cluster with proteins L3 and L19. In the 70S ribosome, L14 and L19 interact and together make contacts with the 16S rRNA in bridges B5 and B8.</text>
</comment>
<comment type="similarity">
    <text evidence="1">Belongs to the universal ribosomal protein uL14 family.</text>
</comment>
<feature type="chain" id="PRO_0000266515" description="Large ribosomal subunit protein uL14">
    <location>
        <begin position="1"/>
        <end position="122"/>
    </location>
</feature>
<evidence type="ECO:0000255" key="1">
    <source>
        <dbReference type="HAMAP-Rule" id="MF_01367"/>
    </source>
</evidence>
<evidence type="ECO:0000305" key="2"/>
<proteinExistence type="inferred from homology"/>
<sequence length="122" mass="13322">MIQMQSNLDVADNSGAKRVQCIKVLGGSKRRFAGVGDIIVVSVKEAQPRARVKKGDVHRAVIVRTKKDVRRTDGSVIRFDSNAAVLVGKNEEPIGTRIFGPVVRELRGKGFMKIISLAPEVL</sequence>
<name>RL14_NOVAD</name>
<organism>
    <name type="scientific">Novosphingobium aromaticivorans (strain ATCC 700278 / DSM 12444 / CCUG 56034 / CIP 105152 / NBRC 16084 / F199)</name>
    <dbReference type="NCBI Taxonomy" id="279238"/>
    <lineage>
        <taxon>Bacteria</taxon>
        <taxon>Pseudomonadati</taxon>
        <taxon>Pseudomonadota</taxon>
        <taxon>Alphaproteobacteria</taxon>
        <taxon>Sphingomonadales</taxon>
        <taxon>Sphingomonadaceae</taxon>
        <taxon>Novosphingobium</taxon>
    </lineage>
</organism>
<keyword id="KW-1185">Reference proteome</keyword>
<keyword id="KW-0687">Ribonucleoprotein</keyword>
<keyword id="KW-0689">Ribosomal protein</keyword>
<keyword id="KW-0694">RNA-binding</keyword>
<keyword id="KW-0699">rRNA-binding</keyword>
<dbReference type="EMBL" id="CP000248">
    <property type="protein sequence ID" value="ABD25703.1"/>
    <property type="molecule type" value="Genomic_DNA"/>
</dbReference>
<dbReference type="RefSeq" id="WP_011444917.1">
    <property type="nucleotide sequence ID" value="NC_007794.1"/>
</dbReference>
<dbReference type="SMR" id="Q2G8X0"/>
<dbReference type="STRING" id="279238.Saro_1259"/>
<dbReference type="KEGG" id="nar:Saro_1259"/>
<dbReference type="eggNOG" id="COG0093">
    <property type="taxonomic scope" value="Bacteria"/>
</dbReference>
<dbReference type="HOGENOM" id="CLU_095071_2_1_5"/>
<dbReference type="Proteomes" id="UP000009134">
    <property type="component" value="Chromosome"/>
</dbReference>
<dbReference type="GO" id="GO:0022625">
    <property type="term" value="C:cytosolic large ribosomal subunit"/>
    <property type="evidence" value="ECO:0007669"/>
    <property type="project" value="TreeGrafter"/>
</dbReference>
<dbReference type="GO" id="GO:0070180">
    <property type="term" value="F:large ribosomal subunit rRNA binding"/>
    <property type="evidence" value="ECO:0007669"/>
    <property type="project" value="TreeGrafter"/>
</dbReference>
<dbReference type="GO" id="GO:0003735">
    <property type="term" value="F:structural constituent of ribosome"/>
    <property type="evidence" value="ECO:0007669"/>
    <property type="project" value="InterPro"/>
</dbReference>
<dbReference type="GO" id="GO:0006412">
    <property type="term" value="P:translation"/>
    <property type="evidence" value="ECO:0007669"/>
    <property type="project" value="UniProtKB-UniRule"/>
</dbReference>
<dbReference type="CDD" id="cd00337">
    <property type="entry name" value="Ribosomal_uL14"/>
    <property type="match status" value="1"/>
</dbReference>
<dbReference type="FunFam" id="2.40.150.20:FF:000001">
    <property type="entry name" value="50S ribosomal protein L14"/>
    <property type="match status" value="1"/>
</dbReference>
<dbReference type="Gene3D" id="2.40.150.20">
    <property type="entry name" value="Ribosomal protein L14"/>
    <property type="match status" value="1"/>
</dbReference>
<dbReference type="HAMAP" id="MF_01367">
    <property type="entry name" value="Ribosomal_uL14"/>
    <property type="match status" value="1"/>
</dbReference>
<dbReference type="InterPro" id="IPR000218">
    <property type="entry name" value="Ribosomal_uL14"/>
</dbReference>
<dbReference type="InterPro" id="IPR005745">
    <property type="entry name" value="Ribosomal_uL14_bac-type"/>
</dbReference>
<dbReference type="InterPro" id="IPR019972">
    <property type="entry name" value="Ribosomal_uL14_CS"/>
</dbReference>
<dbReference type="InterPro" id="IPR036853">
    <property type="entry name" value="Ribosomal_uL14_sf"/>
</dbReference>
<dbReference type="NCBIfam" id="TIGR01067">
    <property type="entry name" value="rplN_bact"/>
    <property type="match status" value="1"/>
</dbReference>
<dbReference type="PANTHER" id="PTHR11761">
    <property type="entry name" value="50S/60S RIBOSOMAL PROTEIN L14/L23"/>
    <property type="match status" value="1"/>
</dbReference>
<dbReference type="PANTHER" id="PTHR11761:SF3">
    <property type="entry name" value="LARGE RIBOSOMAL SUBUNIT PROTEIN UL14M"/>
    <property type="match status" value="1"/>
</dbReference>
<dbReference type="Pfam" id="PF00238">
    <property type="entry name" value="Ribosomal_L14"/>
    <property type="match status" value="1"/>
</dbReference>
<dbReference type="SMART" id="SM01374">
    <property type="entry name" value="Ribosomal_L14"/>
    <property type="match status" value="1"/>
</dbReference>
<dbReference type="SUPFAM" id="SSF50193">
    <property type="entry name" value="Ribosomal protein L14"/>
    <property type="match status" value="1"/>
</dbReference>
<dbReference type="PROSITE" id="PS00049">
    <property type="entry name" value="RIBOSOMAL_L14"/>
    <property type="match status" value="1"/>
</dbReference>
<gene>
    <name evidence="1" type="primary">rplN</name>
    <name type="ordered locus">Saro_1259</name>
</gene>